<organism>
    <name type="scientific">Mus musculus</name>
    <name type="common">Mouse</name>
    <dbReference type="NCBI Taxonomy" id="10090"/>
    <lineage>
        <taxon>Eukaryota</taxon>
        <taxon>Metazoa</taxon>
        <taxon>Chordata</taxon>
        <taxon>Craniata</taxon>
        <taxon>Vertebrata</taxon>
        <taxon>Euteleostomi</taxon>
        <taxon>Mammalia</taxon>
        <taxon>Eutheria</taxon>
        <taxon>Euarchontoglires</taxon>
        <taxon>Glires</taxon>
        <taxon>Rodentia</taxon>
        <taxon>Myomorpha</taxon>
        <taxon>Muroidea</taxon>
        <taxon>Muridae</taxon>
        <taxon>Murinae</taxon>
        <taxon>Mus</taxon>
        <taxon>Mus</taxon>
    </lineage>
</organism>
<accession>O35284</accession>
<accession>A2RT86</accession>
<reference key="1">
    <citation type="journal article" date="2001" name="Eur. J. Immunol.">
        <title>Characterization of murine BATF: a negative regulator of activator protein-1 activity in the thymus.</title>
        <authorList>
            <person name="Williams K.L."/>
            <person name="Nanda I."/>
            <person name="Lyons G.E."/>
            <person name="Kuo C.T."/>
            <person name="Schmid M."/>
            <person name="Leiden J.M."/>
            <person name="Kaplan M.H."/>
            <person name="Taparowsky E.J."/>
        </authorList>
    </citation>
    <scope>NUCLEOTIDE SEQUENCE [MRNA]</scope>
    <scope>FUNCTION</scope>
    <scope>TISSUE SPECIFICITY</scope>
</reference>
<reference key="2">
    <citation type="journal article" date="2005" name="Science">
        <title>The transcriptional landscape of the mammalian genome.</title>
        <authorList>
            <person name="Carninci P."/>
            <person name="Kasukawa T."/>
            <person name="Katayama S."/>
            <person name="Gough J."/>
            <person name="Frith M.C."/>
            <person name="Maeda N."/>
            <person name="Oyama R."/>
            <person name="Ravasi T."/>
            <person name="Lenhard B."/>
            <person name="Wells C."/>
            <person name="Kodzius R."/>
            <person name="Shimokawa K."/>
            <person name="Bajic V.B."/>
            <person name="Brenner S.E."/>
            <person name="Batalov S."/>
            <person name="Forrest A.R."/>
            <person name="Zavolan M."/>
            <person name="Davis M.J."/>
            <person name="Wilming L.G."/>
            <person name="Aidinis V."/>
            <person name="Allen J.E."/>
            <person name="Ambesi-Impiombato A."/>
            <person name="Apweiler R."/>
            <person name="Aturaliya R.N."/>
            <person name="Bailey T.L."/>
            <person name="Bansal M."/>
            <person name="Baxter L."/>
            <person name="Beisel K.W."/>
            <person name="Bersano T."/>
            <person name="Bono H."/>
            <person name="Chalk A.M."/>
            <person name="Chiu K.P."/>
            <person name="Choudhary V."/>
            <person name="Christoffels A."/>
            <person name="Clutterbuck D.R."/>
            <person name="Crowe M.L."/>
            <person name="Dalla E."/>
            <person name="Dalrymple B.P."/>
            <person name="de Bono B."/>
            <person name="Della Gatta G."/>
            <person name="di Bernardo D."/>
            <person name="Down T."/>
            <person name="Engstrom P."/>
            <person name="Fagiolini M."/>
            <person name="Faulkner G."/>
            <person name="Fletcher C.F."/>
            <person name="Fukushima T."/>
            <person name="Furuno M."/>
            <person name="Futaki S."/>
            <person name="Gariboldi M."/>
            <person name="Georgii-Hemming P."/>
            <person name="Gingeras T.R."/>
            <person name="Gojobori T."/>
            <person name="Green R.E."/>
            <person name="Gustincich S."/>
            <person name="Harbers M."/>
            <person name="Hayashi Y."/>
            <person name="Hensch T.K."/>
            <person name="Hirokawa N."/>
            <person name="Hill D."/>
            <person name="Huminiecki L."/>
            <person name="Iacono M."/>
            <person name="Ikeo K."/>
            <person name="Iwama A."/>
            <person name="Ishikawa T."/>
            <person name="Jakt M."/>
            <person name="Kanapin A."/>
            <person name="Katoh M."/>
            <person name="Kawasawa Y."/>
            <person name="Kelso J."/>
            <person name="Kitamura H."/>
            <person name="Kitano H."/>
            <person name="Kollias G."/>
            <person name="Krishnan S.P."/>
            <person name="Kruger A."/>
            <person name="Kummerfeld S.K."/>
            <person name="Kurochkin I.V."/>
            <person name="Lareau L.F."/>
            <person name="Lazarevic D."/>
            <person name="Lipovich L."/>
            <person name="Liu J."/>
            <person name="Liuni S."/>
            <person name="McWilliam S."/>
            <person name="Madan Babu M."/>
            <person name="Madera M."/>
            <person name="Marchionni L."/>
            <person name="Matsuda H."/>
            <person name="Matsuzawa S."/>
            <person name="Miki H."/>
            <person name="Mignone F."/>
            <person name="Miyake S."/>
            <person name="Morris K."/>
            <person name="Mottagui-Tabar S."/>
            <person name="Mulder N."/>
            <person name="Nakano N."/>
            <person name="Nakauchi H."/>
            <person name="Ng P."/>
            <person name="Nilsson R."/>
            <person name="Nishiguchi S."/>
            <person name="Nishikawa S."/>
            <person name="Nori F."/>
            <person name="Ohara O."/>
            <person name="Okazaki Y."/>
            <person name="Orlando V."/>
            <person name="Pang K.C."/>
            <person name="Pavan W.J."/>
            <person name="Pavesi G."/>
            <person name="Pesole G."/>
            <person name="Petrovsky N."/>
            <person name="Piazza S."/>
            <person name="Reed J."/>
            <person name="Reid J.F."/>
            <person name="Ring B.Z."/>
            <person name="Ringwald M."/>
            <person name="Rost B."/>
            <person name="Ruan Y."/>
            <person name="Salzberg S.L."/>
            <person name="Sandelin A."/>
            <person name="Schneider C."/>
            <person name="Schoenbach C."/>
            <person name="Sekiguchi K."/>
            <person name="Semple C.A."/>
            <person name="Seno S."/>
            <person name="Sessa L."/>
            <person name="Sheng Y."/>
            <person name="Shibata Y."/>
            <person name="Shimada H."/>
            <person name="Shimada K."/>
            <person name="Silva D."/>
            <person name="Sinclair B."/>
            <person name="Sperling S."/>
            <person name="Stupka E."/>
            <person name="Sugiura K."/>
            <person name="Sultana R."/>
            <person name="Takenaka Y."/>
            <person name="Taki K."/>
            <person name="Tammoja K."/>
            <person name="Tan S.L."/>
            <person name="Tang S."/>
            <person name="Taylor M.S."/>
            <person name="Tegner J."/>
            <person name="Teichmann S.A."/>
            <person name="Ueda H.R."/>
            <person name="van Nimwegen E."/>
            <person name="Verardo R."/>
            <person name="Wei C.L."/>
            <person name="Yagi K."/>
            <person name="Yamanishi H."/>
            <person name="Zabarovsky E."/>
            <person name="Zhu S."/>
            <person name="Zimmer A."/>
            <person name="Hide W."/>
            <person name="Bult C."/>
            <person name="Grimmond S.M."/>
            <person name="Teasdale R.D."/>
            <person name="Liu E.T."/>
            <person name="Brusic V."/>
            <person name="Quackenbush J."/>
            <person name="Wahlestedt C."/>
            <person name="Mattick J.S."/>
            <person name="Hume D.A."/>
            <person name="Kai C."/>
            <person name="Sasaki D."/>
            <person name="Tomaru Y."/>
            <person name="Fukuda S."/>
            <person name="Kanamori-Katayama M."/>
            <person name="Suzuki M."/>
            <person name="Aoki J."/>
            <person name="Arakawa T."/>
            <person name="Iida J."/>
            <person name="Imamura K."/>
            <person name="Itoh M."/>
            <person name="Kato T."/>
            <person name="Kawaji H."/>
            <person name="Kawagashira N."/>
            <person name="Kawashima T."/>
            <person name="Kojima M."/>
            <person name="Kondo S."/>
            <person name="Konno H."/>
            <person name="Nakano K."/>
            <person name="Ninomiya N."/>
            <person name="Nishio T."/>
            <person name="Okada M."/>
            <person name="Plessy C."/>
            <person name="Shibata K."/>
            <person name="Shiraki T."/>
            <person name="Suzuki S."/>
            <person name="Tagami M."/>
            <person name="Waki K."/>
            <person name="Watahiki A."/>
            <person name="Okamura-Oho Y."/>
            <person name="Suzuki H."/>
            <person name="Kawai J."/>
            <person name="Hayashizaki Y."/>
        </authorList>
    </citation>
    <scope>NUCLEOTIDE SEQUENCE [LARGE SCALE MRNA]</scope>
    <source>
        <strain>C57BL/6J</strain>
        <tissue>Cecum</tissue>
    </source>
</reference>
<reference key="3">
    <citation type="journal article" date="2004" name="Genome Res.">
        <title>The status, quality, and expansion of the NIH full-length cDNA project: the Mammalian Gene Collection (MGC).</title>
        <authorList>
            <consortium name="The MGC Project Team"/>
        </authorList>
    </citation>
    <scope>NUCLEOTIDE SEQUENCE [LARGE SCALE MRNA]</scope>
    <source>
        <tissue>Lung</tissue>
    </source>
</reference>
<reference key="4">
    <citation type="journal article" date="2002" name="Oncogene">
        <title>Stat3-dependent induction of BATF in M1 mouse myeloid leukemia cells.</title>
        <authorList>
            <person name="Senga T."/>
            <person name="Iwamoto T."/>
            <person name="Humphrey S.E."/>
            <person name="Yokota T."/>
            <person name="Taparowsky E.J."/>
            <person name="Hamaguchi M."/>
        </authorList>
    </citation>
    <scope>INDUCTION BY STAT3</scope>
</reference>
<reference key="5">
    <citation type="journal article" date="2003" name="Biochem. J.">
        <title>Phosphorylation of BATF regulates DNA binding: a novel mechanism for AP-1 (activator protein-1) regulation.</title>
        <authorList>
            <person name="Deppmann C.D."/>
            <person name="Thornton T.M."/>
            <person name="Utama F.E."/>
            <person name="Taparowsky E.J."/>
        </authorList>
    </citation>
    <scope>SUBCELLULAR LOCATION</scope>
    <scope>DNA-BINDING</scope>
    <scope>INTERACTION WITH JUNB</scope>
    <scope>PHOSPHORYLATION AT SER-43 AND THR-48</scope>
    <scope>MUTAGENESIS OF SER-43 AND THR-48</scope>
</reference>
<reference key="6">
    <citation type="journal article" date="2003" name="J. Immunol.">
        <title>BATF transgenic mice reveal a role for activator protein-1 in NKT cell development.</title>
        <authorList>
            <person name="Williams K.L."/>
            <person name="Zullo A.J."/>
            <person name="Kaplan M.H."/>
            <person name="Brutkiewicz R.R."/>
            <person name="Deppmann C.D."/>
            <person name="Vinson C."/>
            <person name="Taparowsky E.J."/>
        </authorList>
    </citation>
    <scope>FUNCTION</scope>
</reference>
<reference key="7">
    <citation type="journal article" date="2009" name="Nature">
        <title>The AP-1 transcription factor Batf controls T(H)17 differentiation.</title>
        <authorList>
            <person name="Schraml B.U."/>
            <person name="Hildner K."/>
            <person name="Ise W."/>
            <person name="Lee W.L."/>
            <person name="Smith W.A."/>
            <person name="Solomon B."/>
            <person name="Sahota G."/>
            <person name="Sim J."/>
            <person name="Mukasa R."/>
            <person name="Cemerski S."/>
            <person name="Hatton R.D."/>
            <person name="Stormo G.D."/>
            <person name="Weaver C.T."/>
            <person name="Russell J.H."/>
            <person name="Murphy T.L."/>
            <person name="Murphy K.M."/>
        </authorList>
    </citation>
    <scope>FUNCTION</scope>
    <scope>SUBCELLULAR LOCATION</scope>
    <scope>DNA-BINDING</scope>
    <scope>TISSUE SPECIFICITY</scope>
    <scope>DISRUPTION PHENOTYPE</scope>
    <scope>INTERACTION WITH JUNB</scope>
</reference>
<reference key="8">
    <citation type="journal article" date="2010" name="J. Exp. Med.">
        <title>Batf coordinates multiple aspects of B and T cell function required for normal antibody responses.</title>
        <authorList>
            <person name="Betz B.C."/>
            <person name="Jordan-Williams K.L."/>
            <person name="Wang C."/>
            <person name="Kang S.G."/>
            <person name="Liao J."/>
            <person name="Logan M.R."/>
            <person name="Kim C.H."/>
            <person name="Taparowsky E.J."/>
        </authorList>
    </citation>
    <scope>FUNCTION</scope>
    <scope>TISSUE SPECIFICITY</scope>
    <scope>DISRUPTION PHENOTYPE</scope>
</reference>
<reference key="9">
    <citation type="journal article" date="2011" name="Nat. Immunol.">
        <title>The transcription factor BATF controls the global regulators of class-switch recombination in both B cells and T cells.</title>
        <authorList>
            <person name="Ise W."/>
            <person name="Kohyama M."/>
            <person name="Schraml B.U."/>
            <person name="Zhang T."/>
            <person name="Schwer B."/>
            <person name="Basu U."/>
            <person name="Alt F.W."/>
            <person name="Tang J."/>
            <person name="Oltz E.M."/>
            <person name="Murphy T.L."/>
            <person name="Murphy K.M."/>
        </authorList>
    </citation>
    <scope>FUNCTION</scope>
    <scope>DNA-BINDING</scope>
    <scope>DISRUPTION PHENOTYPE</scope>
</reference>
<reference key="10">
    <citation type="journal article" date="2011" name="Nat. Immunol.">
        <title>Transcription factor c-Maf mediates the TGF-beta-dependent suppression of IL-22 production in T(H)17 cells.</title>
        <authorList>
            <person name="Rutz S."/>
            <person name="Noubade R."/>
            <person name="Eidenschenk C."/>
            <person name="Ota N."/>
            <person name="Zeng W."/>
            <person name="Zheng Y."/>
            <person name="Hackney J."/>
            <person name="Ding J."/>
            <person name="Singh H."/>
            <person name="Ouyang W."/>
        </authorList>
    </citation>
    <scope>FUNCTION</scope>
</reference>
<reference key="11">
    <citation type="journal article" date="2011" name="Proc. Natl. Acad. Sci. U.S.A.">
        <title>Basic leucine zipper transcription factor, ATF-like (BATF) regulates epigenetically and energetically effector CD8 T-cell differentiation via Sirt1 expression.</title>
        <authorList>
            <person name="Kuroda S."/>
            <person name="Yamazaki M."/>
            <person name="Abe M."/>
            <person name="Sakimura K."/>
            <person name="Takayanagi H."/>
            <person name="Iwai Y."/>
        </authorList>
    </citation>
    <scope>DISRUPTION PHENOTYPE</scope>
    <scope>INDUCTION</scope>
</reference>
<reference key="12">
    <citation type="journal article" date="2012" name="Cell">
        <title>A differentiation checkpoint limits hematopoietic stem cell self-renewal in response to DNA damage.</title>
        <authorList>
            <person name="Wang J."/>
            <person name="Sun Q."/>
            <person name="Morita Y."/>
            <person name="Jiang H."/>
            <person name="Gross A."/>
            <person name="Lechel A."/>
            <person name="Hildner K."/>
            <person name="Guachalla L.M."/>
            <person name="Gompf A."/>
            <person name="Hartmann D."/>
            <person name="Schambach A."/>
            <person name="Wuestefeld T."/>
            <person name="Dauch D."/>
            <person name="Schrezenmeier H."/>
            <person name="Hofmann W.K."/>
            <person name="Nakauchi H."/>
            <person name="Ju Z."/>
            <person name="Kestler H.A."/>
            <person name="Zender L."/>
            <person name="Rudolph K.L."/>
        </authorList>
    </citation>
    <scope>FUNCTION</scope>
    <scope>INDUCTION BY STAT3</scope>
</reference>
<reference key="13">
    <citation type="journal article" date="2012" name="Cell">
        <title>A validated regulatory network for Th17 cell specification.</title>
        <authorList>
            <person name="Ciofani M."/>
            <person name="Madar A."/>
            <person name="Galan C."/>
            <person name="Sellars M."/>
            <person name="Mace K."/>
            <person name="Pauli F."/>
            <person name="Agarwal A."/>
            <person name="Huang W."/>
            <person name="Parkurst C.N."/>
            <person name="Muratet M."/>
            <person name="Newberry K.M."/>
            <person name="Meadows S."/>
            <person name="Greenfield A."/>
            <person name="Yang Y."/>
            <person name="Jain P."/>
            <person name="Kirigin F.K."/>
            <person name="Birchmeier C."/>
            <person name="Wagner E.F."/>
            <person name="Murphy K.M."/>
            <person name="Myers R.M."/>
            <person name="Bonneau R."/>
            <person name="Littman D.R."/>
        </authorList>
    </citation>
    <scope>FUNCTION</scope>
</reference>
<reference key="14">
    <citation type="journal article" date="2012" name="J. Biol. Chem.">
        <title>STAT5 protein negatively regulates T follicular helper (Tfh) cell generation and function.</title>
        <authorList>
            <person name="Nurieva R.I."/>
            <person name="Podd A."/>
            <person name="Chen Y."/>
            <person name="Alekseev A.M."/>
            <person name="Yu M."/>
            <person name="Qi X."/>
            <person name="Huang H."/>
            <person name="Wen R."/>
            <person name="Wang J."/>
            <person name="Li H.S."/>
            <person name="Watowich S.S."/>
            <person name="Qi H."/>
            <person name="Dong C."/>
            <person name="Wang D."/>
        </authorList>
    </citation>
    <scope>INDUCTION BY STAT5</scope>
</reference>
<reference key="15">
    <citation type="journal article" date="2012" name="Nature">
        <title>Compensatory dendritic cell development mediated by BATF-IRF interactions.</title>
        <authorList>
            <person name="Tussiwand R."/>
            <person name="Lee W.L."/>
            <person name="Murphy T.L."/>
            <person name="Mashayekhi M."/>
            <person name="Kc W."/>
            <person name="Albring J.C."/>
            <person name="Satpathy A.T."/>
            <person name="Rotondo J.A."/>
            <person name="Edelson B.T."/>
            <person name="Kretzer N.M."/>
            <person name="Wu X."/>
            <person name="Weiss L.A."/>
            <person name="Glasmacher E."/>
            <person name="Li P."/>
            <person name="Liao W."/>
            <person name="Behnke M."/>
            <person name="Lam S.S."/>
            <person name="Aurthur C.T."/>
            <person name="Leonard W.J."/>
            <person name="Singh H."/>
            <person name="Stallings C.L."/>
            <person name="Sibley L.D."/>
            <person name="Schreiber R.D."/>
            <person name="Murphy K.M."/>
        </authorList>
    </citation>
    <scope>FUNCTION</scope>
    <scope>DNA-BINDING</scope>
    <scope>INTERACTION WITH IRF4; IRF8 AND JUNB</scope>
    <scope>MUTAGENESIS OF HIS-55; LEU-56; LYS-63; 69-ARG-LYS-70 AND GLU-77</scope>
</reference>
<reference key="16">
    <citation type="journal article" date="2012" name="Nature">
        <title>BATF-JUN is critical for IRF4-mediated transcription in T cells.</title>
        <authorList>
            <person name="Li P."/>
            <person name="Spolski R."/>
            <person name="Liao W."/>
            <person name="Wang L."/>
            <person name="Murphy T.L."/>
            <person name="Murphy K.M."/>
            <person name="Leonard W.J."/>
        </authorList>
    </citation>
    <scope>FUNCTION</scope>
    <scope>DNA-BINDING</scope>
    <scope>INTERACTION WITH IRF4 AND JUNB</scope>
</reference>
<reference key="17">
    <citation type="journal article" date="2012" name="Science">
        <title>A genomic regulatory element that directs assembly and function of immune-specific AP-1-IRF complexes.</title>
        <authorList>
            <person name="Glasmacher E."/>
            <person name="Agrawal S."/>
            <person name="Chang A.B."/>
            <person name="Murphy T.L."/>
            <person name="Zeng W."/>
            <person name="Vander Lugt B."/>
            <person name="Khan A.A."/>
            <person name="Ciofani M."/>
            <person name="Spooner C."/>
            <person name="Rutz S."/>
            <person name="Hackney J."/>
            <person name="Nurieva R."/>
            <person name="Escalante C.R."/>
            <person name="Ouyang W."/>
            <person name="Littman D.R."/>
            <person name="Murphy K.M."/>
            <person name="Singh H."/>
        </authorList>
    </citation>
    <scope>FUNCTION</scope>
    <scope>DNA-BINDING</scope>
    <scope>INTERACTION WITH IRF4 AND JUNB</scope>
    <scope>MUTAGENESIS OF HIS-55 AND GLU-77</scope>
</reference>
<sequence length="125" mass="14065">MPHSSDSSDSSFSRSPPPGKQDSSDDVRKVQRREKNRIAAQKSRQRQTQKADTLHLESEDLEKQNAALRKEIKQLTEELKYFTSVLSSHEPLCSVLASGTPSPPEVVYSAHAFHQPHISSPRFQP</sequence>
<comment type="function">
    <text evidence="3 5 7 8 9 11 13 14 15 16 17">AP-1 family transcription factor that controls the differentiation of lineage-specific cells in the immune system: specifically mediates the differentiation of T-helper 17 cells (Th17), follicular T-helper cells (TfH), CD8(+) dendritic cells and class-switch recombination (CSR) in B-cells. Acts via the formation of a heterodimer with JUNB that recognizes and binds DNA sequence 5'-TGA[CG]TCA-3'. The BATF-JUNB heterodimer also forms a complex with IRF4 (or IRF8) in immune cells, leading to recognition of AICE sequence (5'-TGAnTCA/GAAA-3'), an immune-specific regulatory element, followed by cooperative binding of BATF and IRF4 (or IRF8) and activation of genes. Controls differentiation of T-helper cells producing interleukin-17 (Th17 cells) by binding to Th17-associated gene promoters: regulates expression of the transcription factor RORC itself and RORC target genes such as IL17 (IL17A or IL17B). Also involved in differentiation of follicular T-helper cells (TfH) by directing expression of BCL6 and MAF. In B-cells, involved in class-switch recombination (CSR) by controlling the expression of both AICDA and of germline transcripts of the intervening heavy-chain region and constant heavy-chain region (I(H)-C(H)). Following infection, can participate in CD8(+) dendritic cell differentiation via interaction with IRF4 and IRF8 to mediate cooperative gene activation. Regulates effector CD8(+) T-cell differentiation by regulating expression of SIRT1. Following DNA damage, part of a differentiation checkpoint that limits self-renewal of hematopoietic stem cells (HSCs): up-regulated by STAT3, leading to differentiation of HSCs, thereby restricting self-renewal of HSCs.</text>
</comment>
<comment type="subunit">
    <text evidence="6 7 14 15 16">Heterodimer; mainly heterodimerizes with JUNB. The BATF-JUNB heterodimer interacts with IRF4 and IRF8. Interacts (via bZIP domain) with IRF4 and IRF8; the interaction is direct. Also forms heterodimers with JUN and JUND. Interacts with IFI35.</text>
</comment>
<comment type="interaction">
    <interactant intactId="EBI-6398523">
        <id>O35284</id>
    </interactant>
    <interactant intactId="EBI-6398485">
        <id>Q64287</id>
        <label>Irf4</label>
    </interactant>
    <organismsDiffer>false</organismsDiffer>
    <experiments>7</experiments>
</comment>
<comment type="subcellular location">
    <subcellularLocation>
        <location>Nucleus</location>
    </subcellularLocation>
    <subcellularLocation>
        <location>Cytoplasm</location>
    </subcellularLocation>
    <text>Present in the nucleus and cytoplasm, but shows increased nuclear translocation after activation of T-cells.</text>
</comment>
<comment type="tissue specificity">
    <text evidence="3 7 8">Detected in postnatal and adult lymphoid tissues such as thymus, spleen and lymph nodes. In thymus most concentrated expression is found in the immediate cortical layer. Differentially expressed during T-cell development in thymus. Highly expressed in Th17, Th1 and Th2 cells and in activated B-cells.</text>
</comment>
<comment type="induction">
    <text evidence="4 10 12 13">Up-regulated by STAT3 in response to DNA damage. Induces by IL12 at late effector stage. Down-regulated by STAT5 in follicular T-helper cells (TfH).</text>
</comment>
<comment type="PTM">
    <text evidence="6">Phosphorylated on serine and threonine residues and at least one tyrosine residue. Phosphorylation at Ser-43 inhibit DNA binding activity and transforms it as a negative regulator of AP-1 mediated transcription.</text>
</comment>
<comment type="disruption phenotype">
    <text evidence="7 8 9 10">Mice are fertile and healthy. They display a normal thymus, spleen and lymph node development, and normal CD4(+) and CD8(+) T-cell development. They also show normal development of natural killer T-cells, B-cells, and conventional and plasmacytoid dendritic cells. They however show defects in T-helper 17 cells (Th17) differentiation and are resistant to experimental autoimmune encephalomyelitis. Loss of follicular T-helper cells (TfH), as well as less production of antibodies with switched isotypes in B-cells is also observed.</text>
</comment>
<comment type="similarity">
    <text evidence="18">Belongs to the bZIP family.</text>
</comment>
<dbReference type="EMBL" id="AF017021">
    <property type="protein sequence ID" value="AAB70251.1"/>
    <property type="molecule type" value="mRNA"/>
</dbReference>
<dbReference type="EMBL" id="AK018587">
    <property type="protein sequence ID" value="BAB31294.1"/>
    <property type="molecule type" value="mRNA"/>
</dbReference>
<dbReference type="EMBL" id="BC132410">
    <property type="protein sequence ID" value="AAI32411.1"/>
    <property type="molecule type" value="mRNA"/>
</dbReference>
<dbReference type="EMBL" id="BC132412">
    <property type="protein sequence ID" value="AAI32413.1"/>
    <property type="molecule type" value="mRNA"/>
</dbReference>
<dbReference type="CCDS" id="CCDS26061.1"/>
<dbReference type="RefSeq" id="NP_058047.1">
    <property type="nucleotide sequence ID" value="NM_016767.2"/>
</dbReference>
<dbReference type="SMR" id="O35284"/>
<dbReference type="BioGRID" id="207278">
    <property type="interactions" value="1"/>
</dbReference>
<dbReference type="FunCoup" id="O35284">
    <property type="interactions" value="1800"/>
</dbReference>
<dbReference type="IntAct" id="O35284">
    <property type="interactions" value="2"/>
</dbReference>
<dbReference type="STRING" id="10090.ENSMUSP00000040706"/>
<dbReference type="iPTMnet" id="O35284"/>
<dbReference type="PhosphoSitePlus" id="O35284"/>
<dbReference type="jPOST" id="O35284"/>
<dbReference type="PaxDb" id="10090-ENSMUSP00000040706"/>
<dbReference type="ProteomicsDB" id="273652"/>
<dbReference type="Antibodypedia" id="25838">
    <property type="antibodies" value="402 antibodies from 35 providers"/>
</dbReference>
<dbReference type="DNASU" id="53314"/>
<dbReference type="Ensembl" id="ENSMUST00000040536.6">
    <property type="protein sequence ID" value="ENSMUSP00000040706.6"/>
    <property type="gene ID" value="ENSMUSG00000034266.7"/>
</dbReference>
<dbReference type="GeneID" id="53314"/>
<dbReference type="KEGG" id="mmu:53314"/>
<dbReference type="UCSC" id="uc007ohd.1">
    <property type="organism name" value="mouse"/>
</dbReference>
<dbReference type="AGR" id="MGI:1859147"/>
<dbReference type="CTD" id="10538"/>
<dbReference type="MGI" id="MGI:1859147">
    <property type="gene designation" value="Batf"/>
</dbReference>
<dbReference type="VEuPathDB" id="HostDB:ENSMUSG00000034266"/>
<dbReference type="eggNOG" id="KOG1414">
    <property type="taxonomic scope" value="Eukaryota"/>
</dbReference>
<dbReference type="GeneTree" id="ENSGT00940000159745"/>
<dbReference type="HOGENOM" id="CLU_088612_4_0_1"/>
<dbReference type="InParanoid" id="O35284"/>
<dbReference type="OMA" id="NSHETHC"/>
<dbReference type="OrthoDB" id="68658at9989"/>
<dbReference type="PhylomeDB" id="O35284"/>
<dbReference type="TreeFam" id="TF332340"/>
<dbReference type="BioGRID-ORCS" id="53314">
    <property type="hits" value="2 hits in 117 CRISPR screens"/>
</dbReference>
<dbReference type="PRO" id="PR:O35284"/>
<dbReference type="Proteomes" id="UP000000589">
    <property type="component" value="Chromosome 12"/>
</dbReference>
<dbReference type="RNAct" id="O35284">
    <property type="molecule type" value="protein"/>
</dbReference>
<dbReference type="Bgee" id="ENSMUSG00000034266">
    <property type="expression patterns" value="Expressed in granulocyte and 90 other cell types or tissues"/>
</dbReference>
<dbReference type="GO" id="GO:0005737">
    <property type="term" value="C:cytoplasm"/>
    <property type="evidence" value="ECO:0000314"/>
    <property type="project" value="UniProtKB"/>
</dbReference>
<dbReference type="GO" id="GO:0005654">
    <property type="term" value="C:nucleoplasm"/>
    <property type="evidence" value="ECO:0007669"/>
    <property type="project" value="Ensembl"/>
</dbReference>
<dbReference type="GO" id="GO:0005634">
    <property type="term" value="C:nucleus"/>
    <property type="evidence" value="ECO:0000314"/>
    <property type="project" value="UniProtKB"/>
</dbReference>
<dbReference type="GO" id="GO:0090575">
    <property type="term" value="C:RNA polymerase II transcription regulator complex"/>
    <property type="evidence" value="ECO:0007669"/>
    <property type="project" value="Ensembl"/>
</dbReference>
<dbReference type="GO" id="GO:0001228">
    <property type="term" value="F:DNA-binding transcription activator activity, RNA polymerase II-specific"/>
    <property type="evidence" value="ECO:0000314"/>
    <property type="project" value="NTNU_SB"/>
</dbReference>
<dbReference type="GO" id="GO:0003700">
    <property type="term" value="F:DNA-binding transcription factor activity"/>
    <property type="evidence" value="ECO:0000314"/>
    <property type="project" value="UniProtKB"/>
</dbReference>
<dbReference type="GO" id="GO:0000978">
    <property type="term" value="F:RNA polymerase II cis-regulatory region sequence-specific DNA binding"/>
    <property type="evidence" value="ECO:0000314"/>
    <property type="project" value="NTNU_SB"/>
</dbReference>
<dbReference type="GO" id="GO:0043565">
    <property type="term" value="F:sequence-specific DNA binding"/>
    <property type="evidence" value="ECO:0000314"/>
    <property type="project" value="UniProtKB"/>
</dbReference>
<dbReference type="GO" id="GO:0042832">
    <property type="term" value="P:defense response to protozoan"/>
    <property type="evidence" value="ECO:0000315"/>
    <property type="project" value="UniProtKB"/>
</dbReference>
<dbReference type="GO" id="GO:0006974">
    <property type="term" value="P:DNA damage response"/>
    <property type="evidence" value="ECO:0000315"/>
    <property type="project" value="UniProtKB"/>
</dbReference>
<dbReference type="GO" id="GO:0030330">
    <property type="term" value="P:DNA damage response, signal transduction by p53 class mediator"/>
    <property type="evidence" value="ECO:0000315"/>
    <property type="project" value="UniProtKB"/>
</dbReference>
<dbReference type="GO" id="GO:0060218">
    <property type="term" value="P:hematopoietic stem cell differentiation"/>
    <property type="evidence" value="ECO:0000315"/>
    <property type="project" value="UniProtKB"/>
</dbReference>
<dbReference type="GO" id="GO:0045190">
    <property type="term" value="P:isotype switching"/>
    <property type="evidence" value="ECO:0000315"/>
    <property type="project" value="UniProtKB"/>
</dbReference>
<dbReference type="GO" id="GO:0002320">
    <property type="term" value="P:lymphoid progenitor cell differentiation"/>
    <property type="evidence" value="ECO:0000315"/>
    <property type="project" value="UniProtKB"/>
</dbReference>
<dbReference type="GO" id="GO:0043011">
    <property type="term" value="P:myeloid dendritic cell differentiation"/>
    <property type="evidence" value="ECO:0000315"/>
    <property type="project" value="UniProtKB"/>
</dbReference>
<dbReference type="GO" id="GO:0001819">
    <property type="term" value="P:positive regulation of cytokine production"/>
    <property type="evidence" value="ECO:0000315"/>
    <property type="project" value="UniProtKB"/>
</dbReference>
<dbReference type="GO" id="GO:0045944">
    <property type="term" value="P:positive regulation of transcription by RNA polymerase II"/>
    <property type="evidence" value="ECO:0000315"/>
    <property type="project" value="NTNU_SB"/>
</dbReference>
<dbReference type="GO" id="GO:0072539">
    <property type="term" value="P:T-helper 17 cell differentiation"/>
    <property type="evidence" value="ECO:0000315"/>
    <property type="project" value="UniProtKB"/>
</dbReference>
<dbReference type="GO" id="GO:0072540">
    <property type="term" value="P:T-helper 17 cell lineage commitment"/>
    <property type="evidence" value="ECO:0000315"/>
    <property type="project" value="UniProtKB"/>
</dbReference>
<dbReference type="GO" id="GO:0045064">
    <property type="term" value="P:T-helper 2 cell differentiation"/>
    <property type="evidence" value="ECO:0000315"/>
    <property type="project" value="UniProtKB"/>
</dbReference>
<dbReference type="CDD" id="cd14701">
    <property type="entry name" value="bZIP_BATF"/>
    <property type="match status" value="1"/>
</dbReference>
<dbReference type="FunFam" id="1.20.5.170:FF:000043">
    <property type="entry name" value="Basic leucine zipper transcriptional factor ATF-like"/>
    <property type="match status" value="1"/>
</dbReference>
<dbReference type="Gene3D" id="1.20.5.170">
    <property type="match status" value="1"/>
</dbReference>
<dbReference type="InterPro" id="IPR000837">
    <property type="entry name" value="AP-1"/>
</dbReference>
<dbReference type="InterPro" id="IPR004827">
    <property type="entry name" value="bZIP"/>
</dbReference>
<dbReference type="InterPro" id="IPR046347">
    <property type="entry name" value="bZIP_sf"/>
</dbReference>
<dbReference type="PANTHER" id="PTHR23351:SF14">
    <property type="entry name" value="BASIC LEUCINE ZIPPER TRANSCRIPTIONAL FACTOR ATF-LIKE"/>
    <property type="match status" value="1"/>
</dbReference>
<dbReference type="PANTHER" id="PTHR23351">
    <property type="entry name" value="FOS TRANSCRIPTION FACTOR-RELATED"/>
    <property type="match status" value="1"/>
</dbReference>
<dbReference type="Pfam" id="PF00170">
    <property type="entry name" value="bZIP_1"/>
    <property type="match status" value="1"/>
</dbReference>
<dbReference type="PRINTS" id="PR00042">
    <property type="entry name" value="LEUZIPPRFOS"/>
</dbReference>
<dbReference type="SMART" id="SM00338">
    <property type="entry name" value="BRLZ"/>
    <property type="match status" value="1"/>
</dbReference>
<dbReference type="SUPFAM" id="SSF57959">
    <property type="entry name" value="Leucine zipper domain"/>
    <property type="match status" value="1"/>
</dbReference>
<dbReference type="PROSITE" id="PS50217">
    <property type="entry name" value="BZIP"/>
    <property type="match status" value="1"/>
</dbReference>
<dbReference type="PROSITE" id="PS00036">
    <property type="entry name" value="BZIP_BASIC"/>
    <property type="match status" value="1"/>
</dbReference>
<name>BATF_MOUSE</name>
<protein>
    <recommendedName>
        <fullName>Basic leucine zipper transcriptional factor ATF-like</fullName>
    </recommendedName>
    <alternativeName>
        <fullName>B-cell-activating transcription factor</fullName>
        <shortName>B-ATF</shortName>
    </alternativeName>
</protein>
<proteinExistence type="evidence at protein level"/>
<gene>
    <name type="primary">Batf</name>
</gene>
<keyword id="KW-0010">Activator</keyword>
<keyword id="KW-0963">Cytoplasm</keyword>
<keyword id="KW-0221">Differentiation</keyword>
<keyword id="KW-0238">DNA-binding</keyword>
<keyword id="KW-0539">Nucleus</keyword>
<keyword id="KW-0597">Phosphoprotein</keyword>
<keyword id="KW-1185">Reference proteome</keyword>
<keyword id="KW-0678">Repressor</keyword>
<keyword id="KW-0804">Transcription</keyword>
<keyword id="KW-0805">Transcription regulation</keyword>
<feature type="chain" id="PRO_0000076596" description="Basic leucine zipper transcriptional factor ATF-like">
    <location>
        <begin position="1"/>
        <end position="125"/>
    </location>
</feature>
<feature type="domain" description="bZIP" evidence="1">
    <location>
        <begin position="26"/>
        <end position="89"/>
    </location>
</feature>
<feature type="region of interest" description="Disordered" evidence="2">
    <location>
        <begin position="1"/>
        <end position="59"/>
    </location>
</feature>
<feature type="region of interest" description="Basic motif" evidence="1">
    <location>
        <begin position="28"/>
        <end position="50"/>
    </location>
</feature>
<feature type="region of interest" description="Leucine-zipper" evidence="1">
    <location>
        <begin position="54"/>
        <end position="75"/>
    </location>
</feature>
<feature type="compositionally biased region" description="Low complexity" evidence="2">
    <location>
        <begin position="1"/>
        <end position="14"/>
    </location>
</feature>
<feature type="modified residue" description="Phosphoserine" evidence="6">
    <location>
        <position position="43"/>
    </location>
</feature>
<feature type="modified residue" description="Phosphothreonine" evidence="6">
    <location>
        <position position="48"/>
    </location>
</feature>
<feature type="mutagenesis site" description="Decreased phosphorylation; when associated with A-48." evidence="6">
    <original>S</original>
    <variation>A</variation>
    <location>
        <position position="43"/>
    </location>
</feature>
<feature type="mutagenesis site" description="Retains the ability to dimerize with JUNB and localization in the nucleus but abolishes DNA-binding." evidence="6">
    <original>S</original>
    <variation>D</variation>
    <location>
        <position position="43"/>
    </location>
</feature>
<feature type="mutagenesis site" description="Decreased phosphorylation; when associated with A-43." evidence="6">
    <original>T</original>
    <variation>A</variation>
    <location>
        <position position="48"/>
    </location>
</feature>
<feature type="mutagenesis site" description="Impairs interaction with IRF4 and the recruitment of IRF4 to AICE motifs, leading to defects in mediate differentiation of Th17 cells. Loss of function; when associated with A-56; D-63 and K-77." evidence="14 16">
    <original>H</original>
    <variation>Q</variation>
    <location>
        <position position="55"/>
    </location>
</feature>
<feature type="mutagenesis site" description="Loss of function; when associated with Q-55; D-63 and K-77." evidence="16">
    <original>L</original>
    <variation>A</variation>
    <location>
        <position position="56"/>
    </location>
</feature>
<feature type="mutagenesis site" description="Retains 50% of activity; when associated with 69-Q-T-70 and K-77. Loss of function; when associated with Q-55; A-56 and K-77." evidence="16">
    <original>K</original>
    <variation>D</variation>
    <location>
        <position position="63"/>
    </location>
</feature>
<feature type="mutagenesis site" description="Retains 50% of activity; when associated with D-63 and K-77." evidence="16">
    <original>RK</original>
    <variation>QT</variation>
    <location>
        <begin position="69"/>
        <end position="70"/>
    </location>
</feature>
<feature type="mutagenesis site" description="Does not affect interaction with IRF4 and ability to mediate differentiation of Th17 cells. Retains 50% of activity; when associated with D63 and 69-Q-T-70. Loss of function; when associated with Q-55; A-56 and D-63." evidence="14 16">
    <original>E</original>
    <variation>K</variation>
    <location>
        <position position="77"/>
    </location>
</feature>
<evidence type="ECO:0000255" key="1">
    <source>
        <dbReference type="PROSITE-ProRule" id="PRU00978"/>
    </source>
</evidence>
<evidence type="ECO:0000256" key="2">
    <source>
        <dbReference type="SAM" id="MobiDB-lite"/>
    </source>
</evidence>
<evidence type="ECO:0000269" key="3">
    <source>
    </source>
</evidence>
<evidence type="ECO:0000269" key="4">
    <source>
    </source>
</evidence>
<evidence type="ECO:0000269" key="5">
    <source>
    </source>
</evidence>
<evidence type="ECO:0000269" key="6">
    <source>
    </source>
</evidence>
<evidence type="ECO:0000269" key="7">
    <source>
    </source>
</evidence>
<evidence type="ECO:0000269" key="8">
    <source>
    </source>
</evidence>
<evidence type="ECO:0000269" key="9">
    <source>
    </source>
</evidence>
<evidence type="ECO:0000269" key="10">
    <source>
    </source>
</evidence>
<evidence type="ECO:0000269" key="11">
    <source>
    </source>
</evidence>
<evidence type="ECO:0000269" key="12">
    <source>
    </source>
</evidence>
<evidence type="ECO:0000269" key="13">
    <source>
    </source>
</evidence>
<evidence type="ECO:0000269" key="14">
    <source>
    </source>
</evidence>
<evidence type="ECO:0000269" key="15">
    <source>
    </source>
</evidence>
<evidence type="ECO:0000269" key="16">
    <source>
    </source>
</evidence>
<evidence type="ECO:0000269" key="17">
    <source>
    </source>
</evidence>
<evidence type="ECO:0000305" key="18"/>